<dbReference type="EMBL" id="X07863">
    <property type="protein sequence ID" value="CAA30711.1"/>
    <property type="molecule type" value="Genomic_DNA"/>
</dbReference>
<dbReference type="EMBL" id="U00096">
    <property type="protein sequence ID" value="AAC75663.1"/>
    <property type="molecule type" value="Genomic_DNA"/>
</dbReference>
<dbReference type="EMBL" id="AP009048">
    <property type="protein sequence ID" value="BAA16498.1"/>
    <property type="molecule type" value="Genomic_DNA"/>
</dbReference>
<dbReference type="PIR" id="S01240">
    <property type="entry name" value="S01240"/>
</dbReference>
<dbReference type="RefSeq" id="NP_417104.1">
    <property type="nucleotide sequence ID" value="NC_000913.3"/>
</dbReference>
<dbReference type="RefSeq" id="WP_001393454.1">
    <property type="nucleotide sequence ID" value="NZ_LN832404.1"/>
</dbReference>
<dbReference type="PDB" id="1DKG">
    <property type="method" value="X-ray"/>
    <property type="resolution" value="2.80 A"/>
    <property type="chains" value="A/B=1-197"/>
</dbReference>
<dbReference type="PDBsum" id="1DKG"/>
<dbReference type="SMR" id="P09372"/>
<dbReference type="BioGRID" id="4260616">
    <property type="interactions" value="188"/>
</dbReference>
<dbReference type="BioGRID" id="851433">
    <property type="interactions" value="3"/>
</dbReference>
<dbReference type="DIP" id="DIP-6141N"/>
<dbReference type="FunCoup" id="P09372">
    <property type="interactions" value="774"/>
</dbReference>
<dbReference type="IntAct" id="P09372">
    <property type="interactions" value="50"/>
</dbReference>
<dbReference type="STRING" id="511145.b2614"/>
<dbReference type="ChEMBL" id="CHEMBL1293284"/>
<dbReference type="jPOST" id="P09372"/>
<dbReference type="PaxDb" id="511145-b2614"/>
<dbReference type="EnsemblBacteria" id="AAC75663">
    <property type="protein sequence ID" value="AAC75663"/>
    <property type="gene ID" value="b2614"/>
</dbReference>
<dbReference type="GeneID" id="947097"/>
<dbReference type="KEGG" id="ecj:JW2594"/>
<dbReference type="KEGG" id="eco:b2614"/>
<dbReference type="KEGG" id="ecoc:C3026_14465"/>
<dbReference type="PATRIC" id="fig|1411691.4.peg.4126"/>
<dbReference type="EchoBASE" id="EB0411"/>
<dbReference type="eggNOG" id="COG0576">
    <property type="taxonomic scope" value="Bacteria"/>
</dbReference>
<dbReference type="HOGENOM" id="CLU_057217_6_0_6"/>
<dbReference type="InParanoid" id="P09372"/>
<dbReference type="OMA" id="PHRHQAI"/>
<dbReference type="OrthoDB" id="9789811at2"/>
<dbReference type="PhylomeDB" id="P09372"/>
<dbReference type="BioCyc" id="EcoCyc:EG10416-MONOMER"/>
<dbReference type="BioCyc" id="MetaCyc:EG10416-MONOMER"/>
<dbReference type="EvolutionaryTrace" id="P09372"/>
<dbReference type="PRO" id="PR:P09372"/>
<dbReference type="Proteomes" id="UP000000625">
    <property type="component" value="Chromosome"/>
</dbReference>
<dbReference type="GO" id="GO:0005737">
    <property type="term" value="C:cytoplasm"/>
    <property type="evidence" value="ECO:0007005"/>
    <property type="project" value="UniProtKB"/>
</dbReference>
<dbReference type="GO" id="GO:0005829">
    <property type="term" value="C:cytosol"/>
    <property type="evidence" value="ECO:0000314"/>
    <property type="project" value="EcoCyc"/>
</dbReference>
<dbReference type="GO" id="GO:0032991">
    <property type="term" value="C:protein-containing complex"/>
    <property type="evidence" value="ECO:0000314"/>
    <property type="project" value="CAFA"/>
</dbReference>
<dbReference type="GO" id="GO:0000774">
    <property type="term" value="F:adenyl-nucleotide exchange factor activity"/>
    <property type="evidence" value="ECO:0000314"/>
    <property type="project" value="EcoCyc"/>
</dbReference>
<dbReference type="GO" id="GO:0019904">
    <property type="term" value="F:protein domain specific binding"/>
    <property type="evidence" value="ECO:0000353"/>
    <property type="project" value="CAFA"/>
</dbReference>
<dbReference type="GO" id="GO:0042803">
    <property type="term" value="F:protein homodimerization activity"/>
    <property type="evidence" value="ECO:0000314"/>
    <property type="project" value="CAFA"/>
</dbReference>
<dbReference type="GO" id="GO:0051087">
    <property type="term" value="F:protein-folding chaperone binding"/>
    <property type="evidence" value="ECO:0007669"/>
    <property type="project" value="InterPro"/>
</dbReference>
<dbReference type="GO" id="GO:0051082">
    <property type="term" value="F:unfolded protein binding"/>
    <property type="evidence" value="ECO:0000318"/>
    <property type="project" value="GO_Central"/>
</dbReference>
<dbReference type="GO" id="GO:0051085">
    <property type="term" value="P:chaperone cofactor-dependent protein refolding"/>
    <property type="evidence" value="ECO:0000314"/>
    <property type="project" value="EcoCyc"/>
</dbReference>
<dbReference type="GO" id="GO:0043335">
    <property type="term" value="P:protein unfolding"/>
    <property type="evidence" value="ECO:0000314"/>
    <property type="project" value="EcoCyc"/>
</dbReference>
<dbReference type="GO" id="GO:0065003">
    <property type="term" value="P:protein-containing complex assembly"/>
    <property type="evidence" value="ECO:0000315"/>
    <property type="project" value="CAFA"/>
</dbReference>
<dbReference type="GO" id="GO:0009408">
    <property type="term" value="P:response to heat"/>
    <property type="evidence" value="ECO:0000314"/>
    <property type="project" value="EcoCyc"/>
</dbReference>
<dbReference type="CDD" id="cd00446">
    <property type="entry name" value="GrpE"/>
    <property type="match status" value="1"/>
</dbReference>
<dbReference type="DisProt" id="DP00103"/>
<dbReference type="FunFam" id="2.30.22.10:FF:000001">
    <property type="entry name" value="Protein GrpE"/>
    <property type="match status" value="1"/>
</dbReference>
<dbReference type="FunFam" id="3.90.20.20:FF:000001">
    <property type="entry name" value="Protein GrpE"/>
    <property type="match status" value="1"/>
</dbReference>
<dbReference type="Gene3D" id="3.90.20.20">
    <property type="match status" value="1"/>
</dbReference>
<dbReference type="Gene3D" id="2.30.22.10">
    <property type="entry name" value="Head domain of nucleotide exchange factor GrpE"/>
    <property type="match status" value="1"/>
</dbReference>
<dbReference type="HAMAP" id="MF_01151">
    <property type="entry name" value="GrpE"/>
    <property type="match status" value="1"/>
</dbReference>
<dbReference type="InterPro" id="IPR000740">
    <property type="entry name" value="GrpE"/>
</dbReference>
<dbReference type="InterPro" id="IPR013805">
    <property type="entry name" value="GrpE_coiled_coil"/>
</dbReference>
<dbReference type="InterPro" id="IPR009012">
    <property type="entry name" value="GrpE_head"/>
</dbReference>
<dbReference type="NCBIfam" id="NF007655">
    <property type="entry name" value="PRK10325.1"/>
    <property type="match status" value="1"/>
</dbReference>
<dbReference type="NCBIfam" id="NF010738">
    <property type="entry name" value="PRK14140.1"/>
    <property type="match status" value="1"/>
</dbReference>
<dbReference type="NCBIfam" id="NF010748">
    <property type="entry name" value="PRK14150.1"/>
    <property type="match status" value="1"/>
</dbReference>
<dbReference type="PANTHER" id="PTHR21237">
    <property type="entry name" value="GRPE PROTEIN"/>
    <property type="match status" value="1"/>
</dbReference>
<dbReference type="PANTHER" id="PTHR21237:SF23">
    <property type="entry name" value="GRPE PROTEIN HOMOLOG, MITOCHONDRIAL"/>
    <property type="match status" value="1"/>
</dbReference>
<dbReference type="Pfam" id="PF01025">
    <property type="entry name" value="GrpE"/>
    <property type="match status" value="1"/>
</dbReference>
<dbReference type="PRINTS" id="PR00773">
    <property type="entry name" value="GRPEPROTEIN"/>
</dbReference>
<dbReference type="SUPFAM" id="SSF58014">
    <property type="entry name" value="Coiled-coil domain of nucleotide exchange factor GrpE"/>
    <property type="match status" value="1"/>
</dbReference>
<dbReference type="SUPFAM" id="SSF51064">
    <property type="entry name" value="Head domain of nucleotide exchange factor GrpE"/>
    <property type="match status" value="1"/>
</dbReference>
<dbReference type="PROSITE" id="PS01071">
    <property type="entry name" value="GRPE"/>
    <property type="match status" value="1"/>
</dbReference>
<name>GRPE_ECOLI</name>
<proteinExistence type="evidence at protein level"/>
<feature type="chain" id="PRO_0000113782" description="Protein GrpE">
    <location>
        <begin position="1"/>
        <end position="197"/>
    </location>
</feature>
<feature type="region of interest" description="Disordered" evidence="1">
    <location>
        <begin position="1"/>
        <end position="40"/>
    </location>
</feature>
<feature type="site" description="Interaction with DnaK">
    <location>
        <position position="183"/>
    </location>
</feature>
<feature type="mutagenesis site" description="Great decrease in ability to interact with DnaK." evidence="4">
    <original>R</original>
    <variation>A</variation>
    <location>
        <position position="73"/>
    </location>
</feature>
<feature type="mutagenesis site" description="Great decrease in ability to interact with DnaK." evidence="4">
    <original>R</original>
    <variation>A</variation>
    <location>
        <position position="74"/>
    </location>
</feature>
<feature type="mutagenesis site" description="Great decrease in ability to interact with DnaK." evidence="4">
    <original>K</original>
    <variation>A</variation>
    <location>
        <position position="82"/>
    </location>
</feature>
<feature type="mutagenesis site" description="No effect in ability to interact with DnaK." evidence="2">
    <original>F</original>
    <variation>A</variation>
    <location>
        <position position="86"/>
    </location>
</feature>
<feature type="mutagenesis site" description="No effect in ability to interact with DnaK." evidence="4">
    <original>R</original>
    <variation>A</variation>
    <location>
        <position position="104"/>
    </location>
</feature>
<feature type="mutagenesis site" description="No effect in ability to interact with DnaK." evidence="4">
    <original>E</original>
    <variation>A</variation>
    <location>
        <position position="107"/>
    </location>
</feature>
<feature type="mutagenesis site" description="No effect in ability to interact with DnaK." evidence="4">
    <original>V</original>
    <variation>A</variation>
    <location>
        <position position="108"/>
    </location>
</feature>
<feature type="mutagenesis site" description="Temperature-sensitive phenotype." evidence="6">
    <original>G</original>
    <variation>D</variation>
    <location>
        <position position="122"/>
    </location>
</feature>
<feature type="mutagenesis site" description="No effect in ability to interact with DnaK." evidence="4">
    <original>L</original>
    <variation>A</variation>
    <location>
        <position position="149"/>
    </location>
</feature>
<feature type="mutagenesis site" description="No effect in ability to interact with DnaK." evidence="4">
    <original>P</original>
    <variation>A</variation>
    <location>
        <position position="151"/>
    </location>
</feature>
<feature type="mutagenesis site" description="No effect in ability to interact with DnaK." evidence="4">
    <original>Q</original>
    <variation>A</variation>
    <location>
        <position position="155"/>
    </location>
</feature>
<feature type="mutagenesis site" description="No effect in ability to interact with DnaK." evidence="4">
    <original>I</original>
    <variation>A</variation>
    <location>
        <position position="157"/>
    </location>
</feature>
<feature type="mutagenesis site" description="No effect in ability to interact with DnaK." evidence="4">
    <original>M</original>
    <variation>A</variation>
    <location>
        <position position="159"/>
    </location>
</feature>
<feature type="mutagenesis site" description="No effect in ability to interact with DnaK." evidence="4">
    <original>M</original>
    <variation>A</variation>
    <location>
        <position position="174"/>
    </location>
</feature>
<feature type="mutagenesis site" description="Loss of ability to interact with DnaK." evidence="2 4">
    <original>R</original>
    <variation>A</variation>
    <location>
        <position position="183"/>
    </location>
</feature>
<feature type="mutagenesis site" description="No effect in ability to interact with DnaK." evidence="5">
    <original>R</original>
    <variation>A</variation>
    <location>
        <position position="186"/>
    </location>
</feature>
<feature type="mutagenesis site" description="No effect in ability to interact with DnaK." evidence="5">
    <original>M</original>
    <variation>A</variation>
    <location>
        <position position="189"/>
    </location>
</feature>
<feature type="mutagenesis site" description="Loss of ability to interact with DnaK." evidence="2 4">
    <original>V</original>
    <variation>A</variation>
    <location>
        <position position="192"/>
    </location>
</feature>
<feature type="helix" evidence="8">
    <location>
        <begin position="39"/>
        <end position="85"/>
    </location>
</feature>
<feature type="helix" evidence="8">
    <location>
        <begin position="88"/>
        <end position="90"/>
    </location>
</feature>
<feature type="helix" evidence="8">
    <location>
        <begin position="91"/>
        <end position="94"/>
    </location>
</feature>
<feature type="helix" evidence="8">
    <location>
        <begin position="96"/>
        <end position="107"/>
    </location>
</feature>
<feature type="helix" evidence="8">
    <location>
        <begin position="117"/>
        <end position="134"/>
    </location>
</feature>
<feature type="turn" evidence="8">
    <location>
        <begin position="135"/>
        <end position="138"/>
    </location>
</feature>
<feature type="strand" evidence="8">
    <location>
        <begin position="139"/>
        <end position="142"/>
    </location>
</feature>
<feature type="strand" evidence="8">
    <location>
        <begin position="146"/>
        <end position="148"/>
    </location>
</feature>
<feature type="strand" evidence="8">
    <location>
        <begin position="153"/>
        <end position="161"/>
    </location>
</feature>
<feature type="strand" evidence="8">
    <location>
        <begin position="163"/>
        <end position="165"/>
    </location>
</feature>
<feature type="strand" evidence="8">
    <location>
        <begin position="169"/>
        <end position="175"/>
    </location>
</feature>
<feature type="strand" evidence="8">
    <location>
        <begin position="177"/>
        <end position="180"/>
    </location>
</feature>
<feature type="strand" evidence="8">
    <location>
        <begin position="183"/>
        <end position="186"/>
    </location>
</feature>
<feature type="strand" evidence="8">
    <location>
        <begin position="188"/>
        <end position="194"/>
    </location>
</feature>
<protein>
    <recommendedName>
        <fullName>Protein GrpE</fullName>
    </recommendedName>
    <alternativeName>
        <fullName>HSP-70 cofactor</fullName>
    </alternativeName>
    <alternativeName>
        <fullName>HSP24</fullName>
    </alternativeName>
    <alternativeName>
        <fullName>Heat shock protein B25.3</fullName>
    </alternativeName>
</protein>
<sequence>MSSKEQKTPEGQAPEEIIMDQHEEIEAVEPEASAEQVDPRDEKVANLEAQLAEAQTRERDGILRVKAEMENLRRRTELDIEKAHKFALEKFINELLPVIDSLDRALEVADKANPDMSAMVEGIELTLKSMLDVVRKFGVEVIAETNVPLDPNVHQAIAMVESDDVAPGNVLGIMQKGYTLNGRTIRAAMVTVAKAKA</sequence>
<keyword id="KW-0002">3D-structure</keyword>
<keyword id="KW-0143">Chaperone</keyword>
<keyword id="KW-0963">Cytoplasm</keyword>
<keyword id="KW-1185">Reference proteome</keyword>
<keyword id="KW-0346">Stress response</keyword>
<reference key="1">
    <citation type="journal article" date="1988" name="Nucleic Acids Res.">
        <title>Sequence analysis and transcriptional regulation of the Escherichia coli grpE gene, encoding a heat shock protein.</title>
        <authorList>
            <person name="Lipinska B."/>
            <person name="King J."/>
            <person name="Ang D."/>
            <person name="Georgopoulos C."/>
        </authorList>
    </citation>
    <scope>NUCLEOTIDE SEQUENCE [GENOMIC DNA]</scope>
    <source>
        <strain>B178</strain>
    </source>
</reference>
<reference key="2">
    <citation type="journal article" date="1997" name="DNA Res.">
        <title>Construction of a contiguous 874-kb sequence of the Escherichia coli-K12 genome corresponding to 50.0-68.8 min on the linkage map and analysis of its sequence features.</title>
        <authorList>
            <person name="Yamamoto Y."/>
            <person name="Aiba H."/>
            <person name="Baba T."/>
            <person name="Hayashi K."/>
            <person name="Inada T."/>
            <person name="Isono K."/>
            <person name="Itoh T."/>
            <person name="Kimura S."/>
            <person name="Kitagawa M."/>
            <person name="Makino K."/>
            <person name="Miki T."/>
            <person name="Mitsuhashi N."/>
            <person name="Mizobuchi K."/>
            <person name="Mori H."/>
            <person name="Nakade S."/>
            <person name="Nakamura Y."/>
            <person name="Nashimoto H."/>
            <person name="Oshima T."/>
            <person name="Oyama S."/>
            <person name="Saito N."/>
            <person name="Sampei G."/>
            <person name="Satoh Y."/>
            <person name="Sivasundaram S."/>
            <person name="Tagami H."/>
            <person name="Takahashi H."/>
            <person name="Takeda J."/>
            <person name="Takemoto K."/>
            <person name="Uehara K."/>
            <person name="Wada C."/>
            <person name="Yamagata S."/>
            <person name="Horiuchi T."/>
        </authorList>
    </citation>
    <scope>NUCLEOTIDE SEQUENCE [LARGE SCALE GENOMIC DNA]</scope>
    <source>
        <strain>K12 / W3110 / ATCC 27325 / DSM 5911</strain>
    </source>
</reference>
<reference key="3">
    <citation type="journal article" date="1997" name="Science">
        <title>The complete genome sequence of Escherichia coli K-12.</title>
        <authorList>
            <person name="Blattner F.R."/>
            <person name="Plunkett G. III"/>
            <person name="Bloch C.A."/>
            <person name="Perna N.T."/>
            <person name="Burland V."/>
            <person name="Riley M."/>
            <person name="Collado-Vides J."/>
            <person name="Glasner J.D."/>
            <person name="Rode C.K."/>
            <person name="Mayhew G.F."/>
            <person name="Gregor J."/>
            <person name="Davis N.W."/>
            <person name="Kirkpatrick H.A."/>
            <person name="Goeden M.A."/>
            <person name="Rose D.J."/>
            <person name="Mau B."/>
            <person name="Shao Y."/>
        </authorList>
    </citation>
    <scope>NUCLEOTIDE SEQUENCE [LARGE SCALE GENOMIC DNA]</scope>
    <source>
        <strain>K12 / MG1655 / ATCC 47076</strain>
    </source>
</reference>
<reference key="4">
    <citation type="journal article" date="2006" name="Mol. Syst. Biol.">
        <title>Highly accurate genome sequences of Escherichia coli K-12 strains MG1655 and W3110.</title>
        <authorList>
            <person name="Hayashi K."/>
            <person name="Morooka N."/>
            <person name="Yamamoto Y."/>
            <person name="Fujita K."/>
            <person name="Isono K."/>
            <person name="Choi S."/>
            <person name="Ohtsubo E."/>
            <person name="Baba T."/>
            <person name="Wanner B.L."/>
            <person name="Mori H."/>
            <person name="Horiuchi T."/>
        </authorList>
    </citation>
    <scope>NUCLEOTIDE SEQUENCE [LARGE SCALE GENOMIC DNA]</scope>
    <source>
        <strain>K12 / W3110 / ATCC 27325 / DSM 5911</strain>
    </source>
</reference>
<reference key="5">
    <citation type="journal article" date="1991" name="Proc. Natl. Acad. Sci. U.S.A.">
        <title>Escherichia coli DnaJ and GrpE heat shock proteins jointly stimulate ATPase activity of DnaK.</title>
        <authorList>
            <person name="Liberek K."/>
            <person name="Marszalek J."/>
            <person name="Ang D."/>
            <person name="Georgopoulos C."/>
            <person name="Zylicz M."/>
        </authorList>
    </citation>
    <scope>POSSIBLE FUNCTION</scope>
</reference>
<reference key="6">
    <citation type="journal article" date="1996" name="EMBO J.">
        <title>Structure-function analysis of the Escherichia coli GrpE heat shock protein.</title>
        <authorList>
            <person name="Wu B."/>
            <person name="Wawrzynow A."/>
            <person name="Zylicz M."/>
            <person name="Georgopoulos C."/>
        </authorList>
    </citation>
    <scope>FUNCTION</scope>
    <scope>MUTAGENESIS</scope>
</reference>
<reference key="7">
    <citation type="journal article" date="1997" name="Electrophoresis">
        <title>Escherichia coli proteome analysis using the gene-protein database.</title>
        <authorList>
            <person name="VanBogelen R.A."/>
            <person name="Abshire K.Z."/>
            <person name="Moldover B."/>
            <person name="Olson E.R."/>
            <person name="Neidhardt F.C."/>
        </authorList>
    </citation>
    <scope>IDENTIFICATION BY 2D-GEL</scope>
</reference>
<reference key="8">
    <citation type="journal article" date="2001" name="Biochem. Biophys. Res. Commun.">
        <title>A GrpE mutant containing the NH(2)-terminal 'tail' region is able to displace bound polypeptide substrate from DnaK.</title>
        <authorList>
            <person name="Mehl A.F."/>
            <person name="Heskett L.D."/>
            <person name="Neal K.M."/>
        </authorList>
    </citation>
    <scope>POSSIBLE ROLE IN PEPTIDE RELEASE FROM DNAK</scope>
</reference>
<reference key="9">
    <citation type="journal article" date="2003" name="J. Biol. Chem.">
        <title>Thermosensor action of GrpE. The DnaK chaperone system at heat shock temperatures.</title>
        <authorList>
            <person name="Grimshaw J.P."/>
            <person name="Jelesarov I."/>
            <person name="Siegenthaler R.K."/>
            <person name="Christen P."/>
        </authorList>
    </citation>
    <scope>POSSIBLE ROLE AS A THERMOSENSOR</scope>
</reference>
<reference key="10">
    <citation type="journal article" date="2004" name="J. Biol. Chem.">
        <title>Influence of GrpE on DnaK-substrate interactions.</title>
        <authorList>
            <person name="Brehmer D."/>
            <person name="Gaessler C."/>
            <person name="Rist W."/>
            <person name="Mayer M.P."/>
            <person name="Bukau B."/>
        </authorList>
    </citation>
    <scope>ROLE IN DNAK INTERACTION WITH SUBSTRATE</scope>
</reference>
<reference key="11">
    <citation type="journal article" date="2003" name="Biochemistry">
        <title>Thermodynamic linkage in the GrpE nucleotide exchange factor, a molecular thermosensor.</title>
        <authorList>
            <person name="Gelinas A.D."/>
            <person name="Toth J."/>
            <person name="Bethoney K.A."/>
            <person name="Langsetmo K."/>
            <person name="Stafford W.F."/>
            <person name="Harrison C.J."/>
        </authorList>
    </citation>
    <scope>MUTAGENESIS OF PHE-86; ARG-183 AND VAL-192</scope>
</reference>
<reference key="12">
    <citation type="journal article" date="2004" name="J. Mol. Biol.">
        <title>Mutational analysis of the energetics of the GrpE.DnaK binding interface: equilibrium association constants by sedimentation velocity analytical ultracentrifugation.</title>
        <authorList>
            <person name="Gelinas A.D."/>
            <person name="Toth J."/>
            <person name="Bethoney K.A."/>
            <person name="Stafford W.F."/>
            <person name="Harrison C.J."/>
        </authorList>
    </citation>
    <scope>MUTAGENESIS OF ARG-73; ARG-74; LYS-82; ARG-104; GLU-107; VAL-108; LEU-149; PRO-151; GLN-155; ILE-157; MET-159; MET-174; ARG-183 AND VAL-192</scope>
</reference>
<reference key="13">
    <citation type="journal article" date="1997" name="Science">
        <title>Crystal structure of the nucleotide exchange factor GrpE bound to the ATPase domain of the molecular chaperone DnaK.</title>
        <authorList>
            <person name="Harrison C.J."/>
            <person name="Hayer-Hartl M."/>
            <person name="di Liberto M."/>
            <person name="Hartl F.-U."/>
            <person name="Kuriyan J."/>
        </authorList>
    </citation>
    <scope>X-RAY CRYSTALLOGRAPHY (2.8 ANGSTROMS) IN COMPLEX WITH ATPASE DOMAIN OF DNAK</scope>
    <scope>MUTAGENESIS OF GLY-122</scope>
</reference>
<comment type="function">
    <text evidence="3 5">Participates actively in the response to hyperosmotic and heat shock by preventing the aggregation of stress-denatured proteins, in association with DnaK and GrpE. It is the nucleotide exchange factor for DnaK and may function as a thermosensor. Unfolded proteins bind initially to DnaJ; upon interaction with the DnaJ-bound protein, DnaK hydrolyzes its bound ATP, resulting in the formation of a stable complex. GrpE releases ADP from DnaK; ATP binding to DnaK triggers the release of the substrate protein, thus completing the reaction cycle. Several rounds of ATP-dependent interactions between DnaJ, DnaK and GrpE are required for fully efficient folding.</text>
</comment>
<comment type="subunit">
    <text evidence="6">Homodimer.</text>
</comment>
<comment type="interaction">
    <interactant intactId="EBI-547441">
        <id>P09372</id>
    </interactant>
    <interactant intactId="EBI-542092">
        <id>P0A6Y8</id>
        <label>dnaK</label>
    </interactant>
    <organismsDiffer>false</organismsDiffer>
    <experiments>10</experiments>
</comment>
<comment type="interaction">
    <interactant intactId="EBI-547441">
        <id>P09372</id>
    </interactant>
    <interactant intactId="EBI-543750">
        <id>P0A6F5</id>
        <label>groEL</label>
    </interactant>
    <organismsDiffer>false</organismsDiffer>
    <experiments>3</experiments>
</comment>
<comment type="interaction">
    <interactant intactId="EBI-547441">
        <id>P09372</id>
    </interactant>
    <interactant intactId="EBI-551337">
        <id>P0A769</id>
        <label>mntH</label>
    </interactant>
    <organismsDiffer>false</organismsDiffer>
    <experiments>3</experiments>
</comment>
<comment type="subcellular location">
    <subcellularLocation>
        <location evidence="7">Cytoplasm</location>
    </subcellularLocation>
</comment>
<comment type="induction">
    <text>By the sigma(32) subunit of RNA polymerase.</text>
</comment>
<comment type="similarity">
    <text evidence="7">Belongs to the GrpE family.</text>
</comment>
<gene>
    <name type="primary">grpE</name>
    <name type="ordered locus">b2614</name>
    <name type="ordered locus">JW2594</name>
</gene>
<organism>
    <name type="scientific">Escherichia coli (strain K12)</name>
    <dbReference type="NCBI Taxonomy" id="83333"/>
    <lineage>
        <taxon>Bacteria</taxon>
        <taxon>Pseudomonadati</taxon>
        <taxon>Pseudomonadota</taxon>
        <taxon>Gammaproteobacteria</taxon>
        <taxon>Enterobacterales</taxon>
        <taxon>Enterobacteriaceae</taxon>
        <taxon>Escherichia</taxon>
    </lineage>
</organism>
<accession>P09372</accession>
<evidence type="ECO:0000256" key="1">
    <source>
        <dbReference type="SAM" id="MobiDB-lite"/>
    </source>
</evidence>
<evidence type="ECO:0000269" key="2">
    <source>
    </source>
</evidence>
<evidence type="ECO:0000269" key="3">
    <source>
    </source>
</evidence>
<evidence type="ECO:0000269" key="4">
    <source>
    </source>
</evidence>
<evidence type="ECO:0000269" key="5">
    <source>
    </source>
</evidence>
<evidence type="ECO:0000269" key="6">
    <source>
    </source>
</evidence>
<evidence type="ECO:0000305" key="7"/>
<evidence type="ECO:0007829" key="8">
    <source>
        <dbReference type="PDB" id="1DKG"/>
    </source>
</evidence>